<organism>
    <name type="scientific">Bos taurus</name>
    <name type="common">Bovine</name>
    <dbReference type="NCBI Taxonomy" id="9913"/>
    <lineage>
        <taxon>Eukaryota</taxon>
        <taxon>Metazoa</taxon>
        <taxon>Chordata</taxon>
        <taxon>Craniata</taxon>
        <taxon>Vertebrata</taxon>
        <taxon>Euteleostomi</taxon>
        <taxon>Mammalia</taxon>
        <taxon>Eutheria</taxon>
        <taxon>Laurasiatheria</taxon>
        <taxon>Artiodactyla</taxon>
        <taxon>Ruminantia</taxon>
        <taxon>Pecora</taxon>
        <taxon>Bovidae</taxon>
        <taxon>Bovinae</taxon>
        <taxon>Bos</taxon>
    </lineage>
</organism>
<dbReference type="EMBL" id="BC113307">
    <property type="protein sequence ID" value="AAI13308.1"/>
    <property type="molecule type" value="mRNA"/>
</dbReference>
<dbReference type="RefSeq" id="NP_001040051.1">
    <property type="nucleotide sequence ID" value="NM_001046586.1"/>
</dbReference>
<dbReference type="SMR" id="Q2HJ53"/>
<dbReference type="FunCoup" id="Q2HJ53">
    <property type="interactions" value="130"/>
</dbReference>
<dbReference type="STRING" id="9913.ENSBTAP00000030624"/>
<dbReference type="PaxDb" id="9913-ENSBTAP00000030624"/>
<dbReference type="Ensembl" id="ENSBTAT00000030652.5">
    <property type="protein sequence ID" value="ENSBTAP00000030624.3"/>
    <property type="gene ID" value="ENSBTAG00000022622.5"/>
</dbReference>
<dbReference type="GeneID" id="616753"/>
<dbReference type="KEGG" id="bta:616753"/>
<dbReference type="CTD" id="1154"/>
<dbReference type="VEuPathDB" id="HostDB:ENSBTAG00000022622"/>
<dbReference type="VGNC" id="VGNC:27374">
    <property type="gene designation" value="CISH"/>
</dbReference>
<dbReference type="eggNOG" id="KOG4566">
    <property type="taxonomic scope" value="Eukaryota"/>
</dbReference>
<dbReference type="GeneTree" id="ENSGT00940000157392"/>
<dbReference type="HOGENOM" id="CLU_079452_4_1_1"/>
<dbReference type="InParanoid" id="Q2HJ53"/>
<dbReference type="OMA" id="LSEPIMQ"/>
<dbReference type="OrthoDB" id="10063348at2759"/>
<dbReference type="TreeFam" id="TF321368"/>
<dbReference type="Reactome" id="R-BTA-8951664">
    <property type="pathway name" value="Neddylation"/>
</dbReference>
<dbReference type="UniPathway" id="UPA00143"/>
<dbReference type="Proteomes" id="UP000009136">
    <property type="component" value="Chromosome 22"/>
</dbReference>
<dbReference type="Bgee" id="ENSBTAG00000022622">
    <property type="expression patterns" value="Expressed in semitendinosus and 102 other cell types or tissues"/>
</dbReference>
<dbReference type="GO" id="GO:0005886">
    <property type="term" value="C:plasma membrane"/>
    <property type="evidence" value="ECO:0007669"/>
    <property type="project" value="Ensembl"/>
</dbReference>
<dbReference type="GO" id="GO:0005126">
    <property type="term" value="F:cytokine receptor binding"/>
    <property type="evidence" value="ECO:0000318"/>
    <property type="project" value="GO_Central"/>
</dbReference>
<dbReference type="GO" id="GO:0019221">
    <property type="term" value="P:cytokine-mediated signaling pathway"/>
    <property type="evidence" value="ECO:0000318"/>
    <property type="project" value="GO_Central"/>
</dbReference>
<dbReference type="GO" id="GO:0035556">
    <property type="term" value="P:intracellular signal transduction"/>
    <property type="evidence" value="ECO:0007669"/>
    <property type="project" value="InterPro"/>
</dbReference>
<dbReference type="GO" id="GO:0001960">
    <property type="term" value="P:negative regulation of cytokine-mediated signaling pathway"/>
    <property type="evidence" value="ECO:0007669"/>
    <property type="project" value="Ensembl"/>
</dbReference>
<dbReference type="GO" id="GO:0046426">
    <property type="term" value="P:negative regulation of receptor signaling pathway via JAK-STAT"/>
    <property type="evidence" value="ECO:0000318"/>
    <property type="project" value="GO_Central"/>
</dbReference>
<dbReference type="GO" id="GO:0016567">
    <property type="term" value="P:protein ubiquitination"/>
    <property type="evidence" value="ECO:0007669"/>
    <property type="project" value="UniProtKB-UniPathway"/>
</dbReference>
<dbReference type="CDD" id="cd10718">
    <property type="entry name" value="SH2_CIS"/>
    <property type="match status" value="1"/>
</dbReference>
<dbReference type="FunFam" id="3.30.505.10:FF:000042">
    <property type="entry name" value="Cytokine-inducible SH2-containing protein b"/>
    <property type="match status" value="1"/>
</dbReference>
<dbReference type="FunFam" id="1.10.750.20:FF:000002">
    <property type="entry name" value="Suppressor of cytokine signaling 2"/>
    <property type="match status" value="1"/>
</dbReference>
<dbReference type="Gene3D" id="3.30.505.10">
    <property type="entry name" value="SH2 domain"/>
    <property type="match status" value="1"/>
</dbReference>
<dbReference type="Gene3D" id="1.10.750.20">
    <property type="entry name" value="SOCS box"/>
    <property type="match status" value="1"/>
</dbReference>
<dbReference type="InterPro" id="IPR035887">
    <property type="entry name" value="CIS_SH2"/>
</dbReference>
<dbReference type="InterPro" id="IPR000980">
    <property type="entry name" value="SH2"/>
</dbReference>
<dbReference type="InterPro" id="IPR036860">
    <property type="entry name" value="SH2_dom_sf"/>
</dbReference>
<dbReference type="InterPro" id="IPR001496">
    <property type="entry name" value="SOCS_box"/>
</dbReference>
<dbReference type="InterPro" id="IPR036036">
    <property type="entry name" value="SOCS_box-like_dom_sf"/>
</dbReference>
<dbReference type="PANTHER" id="PTHR10155:SF9">
    <property type="entry name" value="CYTOKINE-INDUCIBLE SH2-CONTAINING PROTEIN"/>
    <property type="match status" value="1"/>
</dbReference>
<dbReference type="PANTHER" id="PTHR10155">
    <property type="entry name" value="PHOSPHATIDYLINOSITOL 3-KINASE REGULATORY SUBUNIT"/>
    <property type="match status" value="1"/>
</dbReference>
<dbReference type="Pfam" id="PF00017">
    <property type="entry name" value="SH2"/>
    <property type="match status" value="1"/>
</dbReference>
<dbReference type="Pfam" id="PF07525">
    <property type="entry name" value="SOCS_box"/>
    <property type="match status" value="1"/>
</dbReference>
<dbReference type="PRINTS" id="PR00401">
    <property type="entry name" value="SH2DOMAIN"/>
</dbReference>
<dbReference type="SMART" id="SM00252">
    <property type="entry name" value="SH2"/>
    <property type="match status" value="1"/>
</dbReference>
<dbReference type="SMART" id="SM00253">
    <property type="entry name" value="SOCS"/>
    <property type="match status" value="1"/>
</dbReference>
<dbReference type="SMART" id="SM00969">
    <property type="entry name" value="SOCS_box"/>
    <property type="match status" value="1"/>
</dbReference>
<dbReference type="SUPFAM" id="SSF55550">
    <property type="entry name" value="SH2 domain"/>
    <property type="match status" value="1"/>
</dbReference>
<dbReference type="SUPFAM" id="SSF158235">
    <property type="entry name" value="SOCS box-like"/>
    <property type="match status" value="1"/>
</dbReference>
<dbReference type="PROSITE" id="PS50001">
    <property type="entry name" value="SH2"/>
    <property type="match status" value="1"/>
</dbReference>
<dbReference type="PROSITE" id="PS50225">
    <property type="entry name" value="SOCS"/>
    <property type="match status" value="1"/>
</dbReference>
<keyword id="KW-0341">Growth regulation</keyword>
<keyword id="KW-1185">Reference proteome</keyword>
<keyword id="KW-0727">SH2 domain</keyword>
<keyword id="KW-0734">Signal transduction inhibitor</keyword>
<keyword id="KW-0833">Ubl conjugation pathway</keyword>
<sequence>MVLCVQGLCPLLAVEQIGQRPLWAQSLELPQQVMQPLSAGAFLEEAVEESPAQPEREPKVVDPEEDLLCIAKTFSYLRESGWYWGSITASEARQHLQKMPEGTFLVRDSTHPSYLFTLSVKTTRGPTNVRIEYADSSFRLDSNCLSRPRILAFPDVVSLVQHYVASCAADTRSDSPDLATTPALPTPKEDAPGDPALPATAVHLKLVQPFVRRSSTRSLQHLCRLVINRLVVDVDCLPLPRRMADYLRQYPFQL</sequence>
<proteinExistence type="evidence at transcript level"/>
<accession>Q2HJ53</accession>
<reference key="1">
    <citation type="submission" date="2006-02" db="EMBL/GenBank/DDBJ databases">
        <authorList>
            <consortium name="NIH - Mammalian Gene Collection (MGC) project"/>
        </authorList>
    </citation>
    <scope>NUCLEOTIDE SEQUENCE [LARGE SCALE MRNA]</scope>
    <source>
        <strain>Hereford</strain>
        <tissue>Uterus</tissue>
    </source>
</reference>
<feature type="chain" id="PRO_0000244527" description="Cytokine-inducible SH2-containing protein">
    <location>
        <begin position="1"/>
        <end position="254"/>
    </location>
</feature>
<feature type="domain" description="SH2" evidence="2">
    <location>
        <begin position="82"/>
        <end position="188"/>
    </location>
</feature>
<feature type="domain" description="SOCS box" evidence="3">
    <location>
        <begin position="205"/>
        <end position="253"/>
    </location>
</feature>
<feature type="region of interest" description="Disordered" evidence="4">
    <location>
        <begin position="171"/>
        <end position="195"/>
    </location>
</feature>
<protein>
    <recommendedName>
        <fullName>Cytokine-inducible SH2-containing protein</fullName>
        <shortName>CIS</shortName>
    </recommendedName>
</protein>
<evidence type="ECO:0000250" key="1"/>
<evidence type="ECO:0000255" key="2">
    <source>
        <dbReference type="PROSITE-ProRule" id="PRU00191"/>
    </source>
</evidence>
<evidence type="ECO:0000255" key="3">
    <source>
        <dbReference type="PROSITE-ProRule" id="PRU00194"/>
    </source>
</evidence>
<evidence type="ECO:0000256" key="4">
    <source>
        <dbReference type="SAM" id="MobiDB-lite"/>
    </source>
</evidence>
<name>CISH_BOVIN</name>
<gene>
    <name type="primary">CISH</name>
</gene>
<comment type="function">
    <text evidence="1">SOCS family proteins form part of a classical negative feedback system that regulates cytokine signal transduction. CIS is involved in the negative regulation of cytokines that signal through the JAK-STAT5 pathway such as erythropoietin, prolactin and interleukin 3 (IL3) receptor. Inhibits STAT5 trans-activation by suppressing its tyrosine phosphorylation (By similarity). May be a substrate recognition component of a SCF-like ECS (Elongin BC-CUL2/5-SOCS-box protein) E3 ubiquitin-protein ligase complex which mediates the ubiquitination and subsequent proteasomal degradation of target proteins (By similarity).</text>
</comment>
<comment type="pathway">
    <text>Protein modification; protein ubiquitination.</text>
</comment>
<comment type="subunit">
    <text evidence="1">Stably associated with the tyrosine-phosphorylated IL3 receptor beta chain and tyrosine-phosphorylated EPO receptor (EPOR).</text>
</comment>
<comment type="domain">
    <text evidence="1">The SOCS box domain mediates the interaction with the Elongin BC complex, an adapter module in different E3 ubiquitin ligase complexes.</text>
</comment>